<sequence length="116" mass="13052">MKIRKSILAGTLAIVLASPLVTNLDKNEAQASTSLPTSNEYQNEKLANELKSLLDELNVNELATGSLNTYYKRTIKISGLKAMYALKSKDFKKMSEAKYQLQKIYNEIDEALKSKY</sequence>
<dbReference type="EMBL" id="CP000253">
    <property type="protein sequence ID" value="ABD31213.1"/>
    <property type="molecule type" value="Genomic_DNA"/>
</dbReference>
<dbReference type="RefSeq" id="WP_000702262.1">
    <property type="nucleotide sequence ID" value="NZ_LS483365.1"/>
</dbReference>
<dbReference type="RefSeq" id="YP_500655.1">
    <property type="nucleotide sequence ID" value="NC_007795.1"/>
</dbReference>
<dbReference type="BMRB" id="Q2FWV6"/>
<dbReference type="SMR" id="Q2FWV6"/>
<dbReference type="STRING" id="93061.SAOUHSC_02167"/>
<dbReference type="PaxDb" id="1280-SAXN108_2045"/>
<dbReference type="GeneID" id="3921862"/>
<dbReference type="GeneID" id="66840169"/>
<dbReference type="KEGG" id="sao:SAOUHSC_02167"/>
<dbReference type="PATRIC" id="fig|93061.5.peg.1966"/>
<dbReference type="eggNOG" id="ENOG50305IG">
    <property type="taxonomic scope" value="Bacteria"/>
</dbReference>
<dbReference type="HOGENOM" id="CLU_166895_0_0_9"/>
<dbReference type="OrthoDB" id="2405608at2"/>
<dbReference type="PRO" id="PR:Q2FWV6"/>
<dbReference type="Proteomes" id="UP000008816">
    <property type="component" value="Chromosome"/>
</dbReference>
<dbReference type="GO" id="GO:0005576">
    <property type="term" value="C:extracellular region"/>
    <property type="evidence" value="ECO:0007669"/>
    <property type="project" value="UniProtKB-SubCell"/>
</dbReference>
<dbReference type="Gene3D" id="1.20.1270.10">
    <property type="match status" value="1"/>
</dbReference>
<dbReference type="InterPro" id="IPR029048">
    <property type="entry name" value="HSP70_C_sf"/>
</dbReference>
<dbReference type="InterPro" id="IPR021612">
    <property type="entry name" value="SCIN"/>
</dbReference>
<dbReference type="Pfam" id="PF11546">
    <property type="entry name" value="CompInhib_SCIN"/>
    <property type="match status" value="1"/>
</dbReference>
<name>SCIN_STAA8</name>
<organism>
    <name type="scientific">Staphylococcus aureus (strain NCTC 8325 / PS 47)</name>
    <dbReference type="NCBI Taxonomy" id="93061"/>
    <lineage>
        <taxon>Bacteria</taxon>
        <taxon>Bacillati</taxon>
        <taxon>Bacillota</taxon>
        <taxon>Bacilli</taxon>
        <taxon>Bacillales</taxon>
        <taxon>Staphylococcaceae</taxon>
        <taxon>Staphylococcus</taxon>
    </lineage>
</organism>
<accession>Q2FWV6</accession>
<comment type="function">
    <text evidence="4">Involved in countering the first line of host defense mechanisms. Efficiently inhibits opsonization, phagocytosis and killing of S.aureus by human neutrophils. Acts by binding and stabilizing human C3 convertases (C4b2a and C3bBb), leading to their inactivation. The convertases are no longer able to cleave complement C3, therefore preventing further C3b deposition on the bacterial surface and phagocytosis of the bacterium. Also prevents C5a-induced neutrophil responses.</text>
</comment>
<comment type="subcellular location">
    <subcellularLocation>
        <location evidence="3 4">Secreted</location>
    </subcellularLocation>
</comment>
<comment type="developmental stage">
    <text evidence="4">Expressed maximally during the exponential growth phase.</text>
</comment>
<comment type="induction">
    <text evidence="4">Up-regulated by agr and sae loci. Down-regulated by sigma B factor.</text>
</comment>
<comment type="similarity">
    <text evidence="5">Belongs to the SCIN family.</text>
</comment>
<proteinExistence type="evidence at protein level"/>
<reference key="1">
    <citation type="book" date="2006" name="Gram positive pathogens, 2nd edition">
        <title>The Staphylococcus aureus NCTC 8325 genome.</title>
        <editorList>
            <person name="Fischetti V."/>
            <person name="Novick R."/>
            <person name="Ferretti J."/>
            <person name="Portnoy D."/>
            <person name="Rood J."/>
        </editorList>
        <authorList>
            <person name="Gillaspy A.F."/>
            <person name="Worrell V."/>
            <person name="Orvis J."/>
            <person name="Roe B.A."/>
            <person name="Dyer D.W."/>
            <person name="Iandolo J.J."/>
        </authorList>
    </citation>
    <scope>NUCLEOTIDE SEQUENCE [LARGE SCALE GENOMIC DNA]</scope>
    <source>
        <strain>NCTC 8325 / PS 47</strain>
    </source>
</reference>
<reference key="2">
    <citation type="journal article" date="2005" name="Nat. Immunol.">
        <title>Immune evasion by a staphylococcal complement inhibitor that acts on C3 convertases.</title>
        <authorList>
            <person name="Rooijakkers S.H.M."/>
            <person name="Ruyken M."/>
            <person name="Roos A."/>
            <person name="Daha M.R."/>
            <person name="Presanis J.S."/>
            <person name="Sim R.B."/>
            <person name="van Wamel W.J.B."/>
            <person name="van Kessel K.P.M."/>
            <person name="van Strijp J.A.G."/>
        </authorList>
    </citation>
    <scope>CHARACTERIZATION</scope>
    <scope>SUBCELLULAR LOCATION</scope>
    <source>
        <strain>Cowan EMS</strain>
    </source>
</reference>
<reference key="3">
    <citation type="journal article" date="2006" name="Cell. Microbiol.">
        <title>Early expression of SCIN and CHIPS drives instant immune evasion by Staphylococcus aureus.</title>
        <authorList>
            <person name="Rooijakkers S.H.M."/>
            <person name="Ruyken M."/>
            <person name="van Roon J."/>
            <person name="van Kessel K.P.M."/>
            <person name="van Strijp J.A.G."/>
            <person name="van Wamel W.J.B."/>
        </authorList>
    </citation>
    <scope>FUNCTION</scope>
    <scope>SUBCELLULAR LOCATION</scope>
    <scope>DEVELOPMENTAL STAGE</scope>
    <scope>INDUCTION</scope>
</reference>
<evidence type="ECO:0000250" key="1"/>
<evidence type="ECO:0000255" key="2"/>
<evidence type="ECO:0000269" key="3">
    <source>
    </source>
</evidence>
<evidence type="ECO:0000269" key="4">
    <source>
    </source>
</evidence>
<evidence type="ECO:0000305" key="5"/>
<keyword id="KW-1185">Reference proteome</keyword>
<keyword id="KW-0964">Secreted</keyword>
<keyword id="KW-0732">Signal</keyword>
<keyword id="KW-0843">Virulence</keyword>
<feature type="signal peptide" evidence="2">
    <location>
        <begin position="1"/>
        <end position="31"/>
    </location>
</feature>
<feature type="chain" id="PRO_0000319874" description="Staphylococcal complement inhibitor">
    <location>
        <begin position="32"/>
        <end position="116"/>
    </location>
</feature>
<feature type="region of interest" description="Essential for activity" evidence="1">
    <location>
        <begin position="62"/>
        <end position="79"/>
    </location>
</feature>
<gene>
    <name type="primary">scn</name>
    <name type="ordered locus">SAOUHSC_02167</name>
</gene>
<protein>
    <recommendedName>
        <fullName>Staphylococcal complement inhibitor</fullName>
        <shortName>SCIN</shortName>
    </recommendedName>
</protein>